<evidence type="ECO:0000255" key="1">
    <source>
        <dbReference type="HAMAP-Rule" id="MF_01543"/>
    </source>
</evidence>
<proteinExistence type="inferred from homology"/>
<sequence length="555" mass="59093">MSDIEIARAASKLAITQIGERLGISPGDLQPYGHDKAKISASFLHSLEDRKDGKLILVTAINPTPAGEGKTTTTVGLVDGLNRIGAKAMVCVREPSLGPCFGVKGGAAGGGRAQVVPMEDINLHFTGDFHAITSAHNLLAAMIDNHIYWGNEQDLDTRRIAWRRVVDMNDRALREMVGALGGVRNGFPRETGFDITVASEVMAILCLARDLADLEERLGQIVIGYRRDKTPVHARDIKAHQAMTVLLKEAMQPNLVQTLENNPALVHGGPFANIAHGCNSVVATRAALKLADYVVTEAGFGADLGAEKFFDIKCRKAGLRPAAAVIVATVRALKMNGGVAKTELGHEDVAALVRGAVNLGRHVENVRGFGVPVIVAINHFLSDTPAEIAALQDYAASIGVEAVLCRHWAEGGAGIEELARKVAAMADSGIADFQPLYPDDMPLFAKIETVAKRIYRAGSVTADRAVIDQLSQFEAMGYGDLPVCIAKTQYSFSTDPSLLGAPDGHEVHVRDVRLSAGAGFVVAITGDIMTMPGLPRKPAAETIRLDDDGLVEGLF</sequence>
<feature type="chain" id="PRO_1000185242" description="Formate--tetrahydrofolate ligase">
    <location>
        <begin position="1"/>
        <end position="555"/>
    </location>
</feature>
<feature type="binding site" evidence="1">
    <location>
        <begin position="64"/>
        <end position="71"/>
    </location>
    <ligand>
        <name>ATP</name>
        <dbReference type="ChEBI" id="CHEBI:30616"/>
    </ligand>
</feature>
<accession>B9JZN5</accession>
<name>FTHS_ALLAM</name>
<keyword id="KW-0067">ATP-binding</keyword>
<keyword id="KW-0436">Ligase</keyword>
<keyword id="KW-0547">Nucleotide-binding</keyword>
<keyword id="KW-0554">One-carbon metabolism</keyword>
<keyword id="KW-1185">Reference proteome</keyword>
<dbReference type="EC" id="6.3.4.3" evidence="1"/>
<dbReference type="EMBL" id="CP000633">
    <property type="protein sequence ID" value="ACM37345.1"/>
    <property type="molecule type" value="Genomic_DNA"/>
</dbReference>
<dbReference type="RefSeq" id="WP_015916764.1">
    <property type="nucleotide sequence ID" value="NC_011989.1"/>
</dbReference>
<dbReference type="SMR" id="B9JZN5"/>
<dbReference type="STRING" id="311402.Avi_3272"/>
<dbReference type="KEGG" id="avi:Avi_3272"/>
<dbReference type="eggNOG" id="COG2759">
    <property type="taxonomic scope" value="Bacteria"/>
</dbReference>
<dbReference type="HOGENOM" id="CLU_003601_3_3_5"/>
<dbReference type="UniPathway" id="UPA00193"/>
<dbReference type="Proteomes" id="UP000001596">
    <property type="component" value="Chromosome 1"/>
</dbReference>
<dbReference type="GO" id="GO:0005524">
    <property type="term" value="F:ATP binding"/>
    <property type="evidence" value="ECO:0007669"/>
    <property type="project" value="UniProtKB-UniRule"/>
</dbReference>
<dbReference type="GO" id="GO:0004329">
    <property type="term" value="F:formate-tetrahydrofolate ligase activity"/>
    <property type="evidence" value="ECO:0007669"/>
    <property type="project" value="UniProtKB-UniRule"/>
</dbReference>
<dbReference type="GO" id="GO:0035999">
    <property type="term" value="P:tetrahydrofolate interconversion"/>
    <property type="evidence" value="ECO:0007669"/>
    <property type="project" value="UniProtKB-UniRule"/>
</dbReference>
<dbReference type="CDD" id="cd00477">
    <property type="entry name" value="FTHFS"/>
    <property type="match status" value="1"/>
</dbReference>
<dbReference type="FunFam" id="3.30.1510.10:FF:000001">
    <property type="entry name" value="Formate--tetrahydrofolate ligase"/>
    <property type="match status" value="1"/>
</dbReference>
<dbReference type="FunFam" id="3.10.410.10:FF:000001">
    <property type="entry name" value="Putative formate--tetrahydrofolate ligase"/>
    <property type="match status" value="1"/>
</dbReference>
<dbReference type="Gene3D" id="3.30.1510.10">
    <property type="entry name" value="Domain 2, N(10)-formyltetrahydrofolate synthetase"/>
    <property type="match status" value="1"/>
</dbReference>
<dbReference type="Gene3D" id="3.10.410.10">
    <property type="entry name" value="Formyltetrahydrofolate synthetase, domain 3"/>
    <property type="match status" value="1"/>
</dbReference>
<dbReference type="Gene3D" id="3.40.50.300">
    <property type="entry name" value="P-loop containing nucleotide triphosphate hydrolases"/>
    <property type="match status" value="1"/>
</dbReference>
<dbReference type="HAMAP" id="MF_01543">
    <property type="entry name" value="FTHFS"/>
    <property type="match status" value="1"/>
</dbReference>
<dbReference type="InterPro" id="IPR000559">
    <property type="entry name" value="Formate_THF_ligase"/>
</dbReference>
<dbReference type="InterPro" id="IPR020628">
    <property type="entry name" value="Formate_THF_ligase_CS"/>
</dbReference>
<dbReference type="InterPro" id="IPR027417">
    <property type="entry name" value="P-loop_NTPase"/>
</dbReference>
<dbReference type="NCBIfam" id="NF010030">
    <property type="entry name" value="PRK13505.1"/>
    <property type="match status" value="1"/>
</dbReference>
<dbReference type="Pfam" id="PF01268">
    <property type="entry name" value="FTHFS"/>
    <property type="match status" value="1"/>
</dbReference>
<dbReference type="SUPFAM" id="SSF52540">
    <property type="entry name" value="P-loop containing nucleoside triphosphate hydrolases"/>
    <property type="match status" value="1"/>
</dbReference>
<dbReference type="PROSITE" id="PS00721">
    <property type="entry name" value="FTHFS_1"/>
    <property type="match status" value="1"/>
</dbReference>
<dbReference type="PROSITE" id="PS00722">
    <property type="entry name" value="FTHFS_2"/>
    <property type="match status" value="1"/>
</dbReference>
<protein>
    <recommendedName>
        <fullName evidence="1">Formate--tetrahydrofolate ligase</fullName>
        <ecNumber evidence="1">6.3.4.3</ecNumber>
    </recommendedName>
    <alternativeName>
        <fullName evidence="1">Formyltetrahydrofolate synthetase</fullName>
        <shortName evidence="1">FHS</shortName>
        <shortName evidence="1">FTHFS</shortName>
    </alternativeName>
</protein>
<comment type="catalytic activity">
    <reaction evidence="1">
        <text>(6S)-5,6,7,8-tetrahydrofolate + formate + ATP = (6R)-10-formyltetrahydrofolate + ADP + phosphate</text>
        <dbReference type="Rhea" id="RHEA:20221"/>
        <dbReference type="ChEBI" id="CHEBI:15740"/>
        <dbReference type="ChEBI" id="CHEBI:30616"/>
        <dbReference type="ChEBI" id="CHEBI:43474"/>
        <dbReference type="ChEBI" id="CHEBI:57453"/>
        <dbReference type="ChEBI" id="CHEBI:195366"/>
        <dbReference type="ChEBI" id="CHEBI:456216"/>
        <dbReference type="EC" id="6.3.4.3"/>
    </reaction>
</comment>
<comment type="pathway">
    <text evidence="1">One-carbon metabolism; tetrahydrofolate interconversion.</text>
</comment>
<comment type="similarity">
    <text evidence="1">Belongs to the formate--tetrahydrofolate ligase family.</text>
</comment>
<organism>
    <name type="scientific">Allorhizobium ampelinum (strain ATCC BAA-846 / DSM 112012 / S4)</name>
    <name type="common">Agrobacterium vitis (strain S4)</name>
    <dbReference type="NCBI Taxonomy" id="311402"/>
    <lineage>
        <taxon>Bacteria</taxon>
        <taxon>Pseudomonadati</taxon>
        <taxon>Pseudomonadota</taxon>
        <taxon>Alphaproteobacteria</taxon>
        <taxon>Hyphomicrobiales</taxon>
        <taxon>Rhizobiaceae</taxon>
        <taxon>Rhizobium/Agrobacterium group</taxon>
        <taxon>Allorhizobium</taxon>
        <taxon>Allorhizobium ampelinum</taxon>
    </lineage>
</organism>
<reference key="1">
    <citation type="journal article" date="2009" name="J. Bacteriol.">
        <title>Genome sequences of three Agrobacterium biovars help elucidate the evolution of multichromosome genomes in bacteria.</title>
        <authorList>
            <person name="Slater S.C."/>
            <person name="Goldman B.S."/>
            <person name="Goodner B."/>
            <person name="Setubal J.C."/>
            <person name="Farrand S.K."/>
            <person name="Nester E.W."/>
            <person name="Burr T.J."/>
            <person name="Banta L."/>
            <person name="Dickerman A.W."/>
            <person name="Paulsen I."/>
            <person name="Otten L."/>
            <person name="Suen G."/>
            <person name="Welch R."/>
            <person name="Almeida N.F."/>
            <person name="Arnold F."/>
            <person name="Burton O.T."/>
            <person name="Du Z."/>
            <person name="Ewing A."/>
            <person name="Godsy E."/>
            <person name="Heisel S."/>
            <person name="Houmiel K.L."/>
            <person name="Jhaveri J."/>
            <person name="Lu J."/>
            <person name="Miller N.M."/>
            <person name="Norton S."/>
            <person name="Chen Q."/>
            <person name="Phoolcharoen W."/>
            <person name="Ohlin V."/>
            <person name="Ondrusek D."/>
            <person name="Pride N."/>
            <person name="Stricklin S.L."/>
            <person name="Sun J."/>
            <person name="Wheeler C."/>
            <person name="Wilson L."/>
            <person name="Zhu H."/>
            <person name="Wood D.W."/>
        </authorList>
    </citation>
    <scope>NUCLEOTIDE SEQUENCE [LARGE SCALE GENOMIC DNA]</scope>
    <source>
        <strain>ATCC BAA-846 / DSM 112012 / S4</strain>
    </source>
</reference>
<gene>
    <name evidence="1" type="primary">fhs</name>
    <name type="ordered locus">Avi_3272</name>
</gene>